<reference key="1">
    <citation type="journal article" date="1997" name="Nature">
        <title>The complete genome sequence of the gastric pathogen Helicobacter pylori.</title>
        <authorList>
            <person name="Tomb J.-F."/>
            <person name="White O."/>
            <person name="Kerlavage A.R."/>
            <person name="Clayton R.A."/>
            <person name="Sutton G.G."/>
            <person name="Fleischmann R.D."/>
            <person name="Ketchum K.A."/>
            <person name="Klenk H.-P."/>
            <person name="Gill S.R."/>
            <person name="Dougherty B.A."/>
            <person name="Nelson K.E."/>
            <person name="Quackenbush J."/>
            <person name="Zhou L."/>
            <person name="Kirkness E.F."/>
            <person name="Peterson S.N."/>
            <person name="Loftus B.J."/>
            <person name="Richardson D.L."/>
            <person name="Dodson R.J."/>
            <person name="Khalak H.G."/>
            <person name="Glodek A."/>
            <person name="McKenney K."/>
            <person name="FitzGerald L.M."/>
            <person name="Lee N."/>
            <person name="Adams M.D."/>
            <person name="Hickey E.K."/>
            <person name="Berg D.E."/>
            <person name="Gocayne J.D."/>
            <person name="Utterback T.R."/>
            <person name="Peterson J.D."/>
            <person name="Kelley J.M."/>
            <person name="Cotton M.D."/>
            <person name="Weidman J.F."/>
            <person name="Fujii C."/>
            <person name="Bowman C."/>
            <person name="Watthey L."/>
            <person name="Wallin E."/>
            <person name="Hayes W.S."/>
            <person name="Borodovsky M."/>
            <person name="Karp P.D."/>
            <person name="Smith H.O."/>
            <person name="Fraser C.M."/>
            <person name="Venter J.C."/>
        </authorList>
    </citation>
    <scope>NUCLEOTIDE SEQUENCE [LARGE SCALE GENOMIC DNA]</scope>
    <source>
        <strain>ATCC 700392 / 26695</strain>
    </source>
</reference>
<keyword id="KW-0997">Cell inner membrane</keyword>
<keyword id="KW-1003">Cell membrane</keyword>
<keyword id="KW-0472">Membrane</keyword>
<keyword id="KW-0653">Protein transport</keyword>
<keyword id="KW-1185">Reference proteome</keyword>
<keyword id="KW-0811">Translocation</keyword>
<keyword id="KW-0812">Transmembrane</keyword>
<keyword id="KW-1133">Transmembrane helix</keyword>
<keyword id="KW-0813">Transport</keyword>
<proteinExistence type="inferred from homology"/>
<comment type="function">
    <text evidence="1">Part of the twin-arginine translocation (Tat) system that transports large folded proteins containing a characteristic twin-arginine motif in their signal peptide across membranes. Together with TatB, TatC is part of a receptor directly interacting with Tat signal peptides.</text>
</comment>
<comment type="subunit">
    <text evidence="1">The Tat system comprises two distinct complexes: a TatABC complex, containing multiple copies of TatA, TatB and TatC subunits, and a separate TatA complex, containing only TatA subunits. Substrates initially bind to the TatABC complex, which probably triggers association of the separate TatA complex to form the active translocon.</text>
</comment>
<comment type="subcellular location">
    <subcellularLocation>
        <location evidence="1">Cell inner membrane</location>
        <topology evidence="1">Multi-pass membrane protein</topology>
    </subcellularLocation>
</comment>
<comment type="similarity">
    <text evidence="1">Belongs to the TatC family.</text>
</comment>
<gene>
    <name evidence="1" type="primary">tatC</name>
    <name type="ordered locus">HP_1061</name>
</gene>
<name>TATC_HELPY</name>
<organism>
    <name type="scientific">Helicobacter pylori (strain ATCC 700392 / 26695)</name>
    <name type="common">Campylobacter pylori</name>
    <dbReference type="NCBI Taxonomy" id="85962"/>
    <lineage>
        <taxon>Bacteria</taxon>
        <taxon>Pseudomonadati</taxon>
        <taxon>Campylobacterota</taxon>
        <taxon>Epsilonproteobacteria</taxon>
        <taxon>Campylobacterales</taxon>
        <taxon>Helicobacteraceae</taxon>
        <taxon>Helicobacter</taxon>
    </lineage>
</organism>
<accession>O25701</accession>
<sequence>MFEDLKPHLQELRKRLMVSVGTILVAFLGCFHFWKSIFEFVKNSYKGTLIQLSPIEGVMVAVKISFSAAIVISMPIIFWQLWLFIAPGLYKNEKKVILPFVFFGSGMFLIGAAFSYYVVFPFIIEYLATFGSDVFAANISASSYVSFFTRLILGFGVAFELPVLAYFLAKVGLITDASLKAYFKYAIVVIFIVAAIITPPDVVSQIFMALPLVGLYGLSILIAKMVNPAPKDNENNNENNNENNTKENTKSES</sequence>
<dbReference type="EMBL" id="AE000511">
    <property type="protein sequence ID" value="AAD08101.1"/>
    <property type="molecule type" value="Genomic_DNA"/>
</dbReference>
<dbReference type="PIR" id="E64652">
    <property type="entry name" value="E64652"/>
</dbReference>
<dbReference type="RefSeq" id="NP_207852.1">
    <property type="nucleotide sequence ID" value="NC_000915.1"/>
</dbReference>
<dbReference type="RefSeq" id="WP_000461250.1">
    <property type="nucleotide sequence ID" value="NC_018939.1"/>
</dbReference>
<dbReference type="SMR" id="O25701"/>
<dbReference type="FunCoup" id="O25701">
    <property type="interactions" value="328"/>
</dbReference>
<dbReference type="STRING" id="85962.HP_1061"/>
<dbReference type="PaxDb" id="85962-C694_05485"/>
<dbReference type="EnsemblBacteria" id="AAD08101">
    <property type="protein sequence ID" value="AAD08101"/>
    <property type="gene ID" value="HP_1061"/>
</dbReference>
<dbReference type="KEGG" id="heo:C694_05485"/>
<dbReference type="KEGG" id="hpy:HP_1061"/>
<dbReference type="PATRIC" id="fig|85962.47.peg.1140"/>
<dbReference type="eggNOG" id="COG0805">
    <property type="taxonomic scope" value="Bacteria"/>
</dbReference>
<dbReference type="InParanoid" id="O25701"/>
<dbReference type="OrthoDB" id="9777044at2"/>
<dbReference type="PhylomeDB" id="O25701"/>
<dbReference type="Proteomes" id="UP000000429">
    <property type="component" value="Chromosome"/>
</dbReference>
<dbReference type="GO" id="GO:0033281">
    <property type="term" value="C:TAT protein transport complex"/>
    <property type="evidence" value="ECO:0000318"/>
    <property type="project" value="GO_Central"/>
</dbReference>
<dbReference type="GO" id="GO:0009977">
    <property type="term" value="F:proton motive force dependent protein transmembrane transporter activity"/>
    <property type="evidence" value="ECO:0000318"/>
    <property type="project" value="GO_Central"/>
</dbReference>
<dbReference type="GO" id="GO:0065002">
    <property type="term" value="P:intracellular protein transmembrane transport"/>
    <property type="evidence" value="ECO:0000318"/>
    <property type="project" value="GO_Central"/>
</dbReference>
<dbReference type="GO" id="GO:0043953">
    <property type="term" value="P:protein transport by the Tat complex"/>
    <property type="evidence" value="ECO:0000318"/>
    <property type="project" value="GO_Central"/>
</dbReference>
<dbReference type="HAMAP" id="MF_00902">
    <property type="entry name" value="TatC"/>
    <property type="match status" value="1"/>
</dbReference>
<dbReference type="InterPro" id="IPR019820">
    <property type="entry name" value="Sec-indep_translocase_CS"/>
</dbReference>
<dbReference type="InterPro" id="IPR002033">
    <property type="entry name" value="TatC"/>
</dbReference>
<dbReference type="NCBIfam" id="TIGR00945">
    <property type="entry name" value="tatC"/>
    <property type="match status" value="1"/>
</dbReference>
<dbReference type="PANTHER" id="PTHR30371">
    <property type="entry name" value="SEC-INDEPENDENT PROTEIN TRANSLOCASE PROTEIN TATC"/>
    <property type="match status" value="1"/>
</dbReference>
<dbReference type="PANTHER" id="PTHR30371:SF0">
    <property type="entry name" value="SEC-INDEPENDENT PROTEIN TRANSLOCASE PROTEIN TATC, CHLOROPLASTIC-RELATED"/>
    <property type="match status" value="1"/>
</dbReference>
<dbReference type="Pfam" id="PF00902">
    <property type="entry name" value="TatC"/>
    <property type="match status" value="1"/>
</dbReference>
<dbReference type="PRINTS" id="PR01840">
    <property type="entry name" value="TATCFAMILY"/>
</dbReference>
<dbReference type="PROSITE" id="PS01218">
    <property type="entry name" value="TATC"/>
    <property type="match status" value="1"/>
</dbReference>
<evidence type="ECO:0000255" key="1">
    <source>
        <dbReference type="HAMAP-Rule" id="MF_00902"/>
    </source>
</evidence>
<evidence type="ECO:0000256" key="2">
    <source>
        <dbReference type="SAM" id="MobiDB-lite"/>
    </source>
</evidence>
<feature type="chain" id="PRO_0000098087" description="Sec-independent protein translocase protein TatC">
    <location>
        <begin position="1"/>
        <end position="253"/>
    </location>
</feature>
<feature type="transmembrane region" description="Helical" evidence="1">
    <location>
        <begin position="18"/>
        <end position="38"/>
    </location>
</feature>
<feature type="transmembrane region" description="Helical" evidence="1">
    <location>
        <begin position="69"/>
        <end position="89"/>
    </location>
</feature>
<feature type="transmembrane region" description="Helical" evidence="1">
    <location>
        <begin position="96"/>
        <end position="116"/>
    </location>
</feature>
<feature type="transmembrane region" description="Helical" evidence="1">
    <location>
        <begin position="151"/>
        <end position="171"/>
    </location>
</feature>
<feature type="transmembrane region" description="Helical" evidence="1">
    <location>
        <begin position="187"/>
        <end position="207"/>
    </location>
</feature>
<feature type="transmembrane region" description="Helical" evidence="1">
    <location>
        <begin position="208"/>
        <end position="228"/>
    </location>
</feature>
<feature type="region of interest" description="Disordered" evidence="2">
    <location>
        <begin position="231"/>
        <end position="253"/>
    </location>
</feature>
<feature type="compositionally biased region" description="Basic and acidic residues" evidence="2">
    <location>
        <begin position="244"/>
        <end position="253"/>
    </location>
</feature>
<protein>
    <recommendedName>
        <fullName evidence="1">Sec-independent protein translocase protein TatC</fullName>
    </recommendedName>
</protein>